<reference key="1">
    <citation type="submission" date="2006-10" db="EMBL/GenBank/DDBJ databases">
        <authorList>
            <person name="Fleischmann R.D."/>
            <person name="Dodson R.J."/>
            <person name="Haft D.H."/>
            <person name="Merkel J.S."/>
            <person name="Nelson W.C."/>
            <person name="Fraser C.M."/>
        </authorList>
    </citation>
    <scope>NUCLEOTIDE SEQUENCE [LARGE SCALE GENOMIC DNA]</scope>
    <source>
        <strain>104</strain>
    </source>
</reference>
<dbReference type="EC" id="2.2.1.9" evidence="1"/>
<dbReference type="EMBL" id="CP000479">
    <property type="protein sequence ID" value="ABK66250.1"/>
    <property type="molecule type" value="Genomic_DNA"/>
</dbReference>
<dbReference type="RefSeq" id="WP_003879350.1">
    <property type="nucleotide sequence ID" value="NC_008595.1"/>
</dbReference>
<dbReference type="SMR" id="A0QLC9"/>
<dbReference type="GeneID" id="75272112"/>
<dbReference type="KEGG" id="mav:MAV_4588"/>
<dbReference type="HOGENOM" id="CLU_006051_4_1_11"/>
<dbReference type="UniPathway" id="UPA00079"/>
<dbReference type="UniPathway" id="UPA01057">
    <property type="reaction ID" value="UER00164"/>
</dbReference>
<dbReference type="Proteomes" id="UP000001574">
    <property type="component" value="Chromosome"/>
</dbReference>
<dbReference type="GO" id="GO:0070204">
    <property type="term" value="F:2-succinyl-5-enolpyruvyl-6-hydroxy-3-cyclohexene-1-carboxylic-acid synthase activity"/>
    <property type="evidence" value="ECO:0007669"/>
    <property type="project" value="UniProtKB-UniRule"/>
</dbReference>
<dbReference type="GO" id="GO:0000287">
    <property type="term" value="F:magnesium ion binding"/>
    <property type="evidence" value="ECO:0007669"/>
    <property type="project" value="UniProtKB-UniRule"/>
</dbReference>
<dbReference type="GO" id="GO:0030145">
    <property type="term" value="F:manganese ion binding"/>
    <property type="evidence" value="ECO:0007669"/>
    <property type="project" value="UniProtKB-UniRule"/>
</dbReference>
<dbReference type="GO" id="GO:0030976">
    <property type="term" value="F:thiamine pyrophosphate binding"/>
    <property type="evidence" value="ECO:0007669"/>
    <property type="project" value="UniProtKB-UniRule"/>
</dbReference>
<dbReference type="GO" id="GO:0009234">
    <property type="term" value="P:menaquinone biosynthetic process"/>
    <property type="evidence" value="ECO:0007669"/>
    <property type="project" value="UniProtKB-UniRule"/>
</dbReference>
<dbReference type="CDD" id="cd07037">
    <property type="entry name" value="TPP_PYR_MenD"/>
    <property type="match status" value="1"/>
</dbReference>
<dbReference type="CDD" id="cd02009">
    <property type="entry name" value="TPP_SHCHC_synthase"/>
    <property type="match status" value="1"/>
</dbReference>
<dbReference type="FunFam" id="3.40.50.970:FF:000066">
    <property type="entry name" value="2-succinyl-5-enolpyruvyl-6-hydroxy-3-cyclohexene-1-carboxylate synthase"/>
    <property type="match status" value="1"/>
</dbReference>
<dbReference type="Gene3D" id="3.40.50.970">
    <property type="match status" value="2"/>
</dbReference>
<dbReference type="Gene3D" id="3.40.50.1220">
    <property type="entry name" value="TPP-binding domain"/>
    <property type="match status" value="1"/>
</dbReference>
<dbReference type="HAMAP" id="MF_01659">
    <property type="entry name" value="MenD"/>
    <property type="match status" value="1"/>
</dbReference>
<dbReference type="InterPro" id="IPR004433">
    <property type="entry name" value="MenaQ_synth_MenD"/>
</dbReference>
<dbReference type="InterPro" id="IPR029061">
    <property type="entry name" value="THDP-binding"/>
</dbReference>
<dbReference type="InterPro" id="IPR012001">
    <property type="entry name" value="Thiamin_PyroP_enz_TPP-bd_dom"/>
</dbReference>
<dbReference type="NCBIfam" id="TIGR00173">
    <property type="entry name" value="menD"/>
    <property type="match status" value="1"/>
</dbReference>
<dbReference type="PANTHER" id="PTHR42916">
    <property type="entry name" value="2-SUCCINYL-5-ENOLPYRUVYL-6-HYDROXY-3-CYCLOHEXENE-1-CARBOXYLATE SYNTHASE"/>
    <property type="match status" value="1"/>
</dbReference>
<dbReference type="PANTHER" id="PTHR42916:SF1">
    <property type="entry name" value="PROTEIN PHYLLO, CHLOROPLASTIC"/>
    <property type="match status" value="1"/>
</dbReference>
<dbReference type="Pfam" id="PF02776">
    <property type="entry name" value="TPP_enzyme_N"/>
    <property type="match status" value="1"/>
</dbReference>
<dbReference type="PIRSF" id="PIRSF004983">
    <property type="entry name" value="MenD"/>
    <property type="match status" value="1"/>
</dbReference>
<dbReference type="SUPFAM" id="SSF52518">
    <property type="entry name" value="Thiamin diphosphate-binding fold (THDP-binding)"/>
    <property type="match status" value="2"/>
</dbReference>
<name>MEND_MYCA1</name>
<organism>
    <name type="scientific">Mycobacterium avium (strain 104)</name>
    <dbReference type="NCBI Taxonomy" id="243243"/>
    <lineage>
        <taxon>Bacteria</taxon>
        <taxon>Bacillati</taxon>
        <taxon>Actinomycetota</taxon>
        <taxon>Actinomycetes</taxon>
        <taxon>Mycobacteriales</taxon>
        <taxon>Mycobacteriaceae</taxon>
        <taxon>Mycobacterium</taxon>
        <taxon>Mycobacterium avium complex (MAC)</taxon>
    </lineage>
</organism>
<keyword id="KW-0460">Magnesium</keyword>
<keyword id="KW-0464">Manganese</keyword>
<keyword id="KW-0474">Menaquinone biosynthesis</keyword>
<keyword id="KW-0479">Metal-binding</keyword>
<keyword id="KW-0786">Thiamine pyrophosphate</keyword>
<keyword id="KW-0808">Transferase</keyword>
<feature type="chain" id="PRO_0000341774" description="2-succinyl-5-enolpyruvyl-6-hydroxy-3-cyclohexene-1-carboxylate synthase">
    <location>
        <begin position="1"/>
        <end position="545"/>
    </location>
</feature>
<feature type="region of interest" description="Disordered" evidence="2">
    <location>
        <begin position="184"/>
        <end position="209"/>
    </location>
</feature>
<feature type="compositionally biased region" description="Low complexity" evidence="2">
    <location>
        <begin position="195"/>
        <end position="205"/>
    </location>
</feature>
<comment type="function">
    <text evidence="1">Catalyzes the thiamine diphosphate-dependent decarboxylation of 2-oxoglutarate and the subsequent addition of the resulting succinic semialdehyde-thiamine pyrophosphate anion to isochorismate to yield 2-succinyl-5-enolpyruvyl-6-hydroxy-3-cyclohexene-1-carboxylate (SEPHCHC).</text>
</comment>
<comment type="catalytic activity">
    <reaction evidence="1">
        <text>isochorismate + 2-oxoglutarate + H(+) = 5-enolpyruvoyl-6-hydroxy-2-succinyl-cyclohex-3-ene-1-carboxylate + CO2</text>
        <dbReference type="Rhea" id="RHEA:25593"/>
        <dbReference type="ChEBI" id="CHEBI:15378"/>
        <dbReference type="ChEBI" id="CHEBI:16526"/>
        <dbReference type="ChEBI" id="CHEBI:16810"/>
        <dbReference type="ChEBI" id="CHEBI:29780"/>
        <dbReference type="ChEBI" id="CHEBI:58818"/>
        <dbReference type="EC" id="2.2.1.9"/>
    </reaction>
</comment>
<comment type="cofactor">
    <cofactor evidence="1">
        <name>Mg(2+)</name>
        <dbReference type="ChEBI" id="CHEBI:18420"/>
    </cofactor>
    <cofactor evidence="1">
        <name>Mn(2+)</name>
        <dbReference type="ChEBI" id="CHEBI:29035"/>
    </cofactor>
</comment>
<comment type="cofactor">
    <cofactor evidence="1">
        <name>thiamine diphosphate</name>
        <dbReference type="ChEBI" id="CHEBI:58937"/>
    </cofactor>
    <text evidence="1">Binds 1 thiamine pyrophosphate per subunit.</text>
</comment>
<comment type="pathway">
    <text evidence="1">Quinol/quinone metabolism; 1,4-dihydroxy-2-naphthoate biosynthesis; 1,4-dihydroxy-2-naphthoate from chorismate: step 2/7.</text>
</comment>
<comment type="pathway">
    <text evidence="1">Quinol/quinone metabolism; menaquinone biosynthesis.</text>
</comment>
<comment type="subunit">
    <text evidence="1">Homodimer.</text>
</comment>
<comment type="similarity">
    <text evidence="1">Belongs to the TPP enzyme family. MenD subfamily.</text>
</comment>
<gene>
    <name evidence="1" type="primary">menD</name>
    <name type="ordered locus">MAV_4588</name>
</gene>
<protein>
    <recommendedName>
        <fullName evidence="1">2-succinyl-5-enolpyruvyl-6-hydroxy-3-cyclohexene-1-carboxylate synthase</fullName>
        <shortName evidence="1">SEPHCHC synthase</shortName>
        <ecNumber evidence="1">2.2.1.9</ecNumber>
    </recommendedName>
    <alternativeName>
        <fullName evidence="1">Menaquinone biosynthesis protein MenD</fullName>
    </alternativeName>
</protein>
<accession>A0QLC9</accession>
<evidence type="ECO:0000255" key="1">
    <source>
        <dbReference type="HAMAP-Rule" id="MF_01659"/>
    </source>
</evidence>
<evidence type="ECO:0000256" key="2">
    <source>
        <dbReference type="SAM" id="MobiDB-lite"/>
    </source>
</evidence>
<proteinExistence type="inferred from homology"/>
<sequence length="545" mass="56722">MNPSTTQARVVVDELIRGGVRDVVLCPGSRNAPLAFALADADRAGRIRLHVRIDERTAGYLAIGLAIAAGAPVCVAMTSGTAVANLGPAVVEANYARVPLIVLSANRPYELLGTGANQTMEQLGYFGTQVRAAISLGLAEDAPERLDALNATWRSATCRVLAAATGSRTANAGPVQFDIPLREPLVPDPEPHGAPTPAGRPGGRPWTYTPPVSFDQPLDIDLSPDTVVIAGHGAGTHPNLAQLPTVAEPTAPAPDNPLHPLALRLLRPKQVIMLGRPTLHRPVSALLADPQVPVYALTTGPRWPDVSGNSQATGTRAVTTGAPSPAWLHRCEQANRHAVAAVRGQLAAHPLTTGLHVAAAVADALRPGDQLVLGASNPVRDAALVGLDSHHIRVRSNRGVAGIDGTVSTAIGAALAHEAAHDGRTVALIGDLTFVHDSSGLLIGPTEPTPRRLTIVVSNDNGGGIFELLEQGDPRFSDVSSRVFGTPHDVDVGALCRAYHVESAQIEVGELAAALDEPGPGMRVLEVKADRSSLRQLHAAIKAAL</sequence>